<dbReference type="EC" id="2.7.7.59" evidence="1"/>
<dbReference type="EC" id="3.1.4.-" evidence="1"/>
<dbReference type="EMBL" id="CP001657">
    <property type="protein sequence ID" value="ACT11989.1"/>
    <property type="molecule type" value="Genomic_DNA"/>
</dbReference>
<dbReference type="RefSeq" id="WP_012773628.1">
    <property type="nucleotide sequence ID" value="NC_012917.1"/>
</dbReference>
<dbReference type="SMR" id="C6DAI1"/>
<dbReference type="STRING" id="561230.PC1_0939"/>
<dbReference type="KEGG" id="pct:PC1_0939"/>
<dbReference type="eggNOG" id="COG2844">
    <property type="taxonomic scope" value="Bacteria"/>
</dbReference>
<dbReference type="HOGENOM" id="CLU_012833_0_0_6"/>
<dbReference type="OrthoDB" id="9758038at2"/>
<dbReference type="Proteomes" id="UP000002736">
    <property type="component" value="Chromosome"/>
</dbReference>
<dbReference type="GO" id="GO:0008773">
    <property type="term" value="F:[protein-PII] uridylyltransferase activity"/>
    <property type="evidence" value="ECO:0007669"/>
    <property type="project" value="UniProtKB-UniRule"/>
</dbReference>
<dbReference type="GO" id="GO:0008081">
    <property type="term" value="F:phosphoric diester hydrolase activity"/>
    <property type="evidence" value="ECO:0007669"/>
    <property type="project" value="UniProtKB-UniRule"/>
</dbReference>
<dbReference type="GO" id="GO:0006808">
    <property type="term" value="P:regulation of nitrogen utilization"/>
    <property type="evidence" value="ECO:0007669"/>
    <property type="project" value="UniProtKB-UniRule"/>
</dbReference>
<dbReference type="CDD" id="cd04899">
    <property type="entry name" value="ACT_ACR-UUR-like_2"/>
    <property type="match status" value="1"/>
</dbReference>
<dbReference type="CDD" id="cd04900">
    <property type="entry name" value="ACT_UUR-like_1"/>
    <property type="match status" value="1"/>
</dbReference>
<dbReference type="CDD" id="cd00077">
    <property type="entry name" value="HDc"/>
    <property type="match status" value="1"/>
</dbReference>
<dbReference type="CDD" id="cd05401">
    <property type="entry name" value="NT_GlnE_GlnD_like"/>
    <property type="match status" value="1"/>
</dbReference>
<dbReference type="FunFam" id="1.10.3210.10:FF:000005">
    <property type="entry name" value="Bifunctional uridylyltransferase/uridylyl-removing enzyme"/>
    <property type="match status" value="1"/>
</dbReference>
<dbReference type="Gene3D" id="1.10.3210.10">
    <property type="entry name" value="Hypothetical protein af1432"/>
    <property type="match status" value="1"/>
</dbReference>
<dbReference type="HAMAP" id="MF_00277">
    <property type="entry name" value="PII_uridylyl_transf"/>
    <property type="match status" value="1"/>
</dbReference>
<dbReference type="InterPro" id="IPR045865">
    <property type="entry name" value="ACT-like_dom_sf"/>
</dbReference>
<dbReference type="InterPro" id="IPR002912">
    <property type="entry name" value="ACT_dom"/>
</dbReference>
<dbReference type="InterPro" id="IPR003607">
    <property type="entry name" value="HD/PDEase_dom"/>
</dbReference>
<dbReference type="InterPro" id="IPR006674">
    <property type="entry name" value="HD_domain"/>
</dbReference>
<dbReference type="InterPro" id="IPR043519">
    <property type="entry name" value="NT_sf"/>
</dbReference>
<dbReference type="InterPro" id="IPR013546">
    <property type="entry name" value="PII_UdlTrfase/GS_AdlTrfase"/>
</dbReference>
<dbReference type="InterPro" id="IPR002934">
    <property type="entry name" value="Polymerase_NTP_transf_dom"/>
</dbReference>
<dbReference type="InterPro" id="IPR010043">
    <property type="entry name" value="UTase/UR"/>
</dbReference>
<dbReference type="NCBIfam" id="NF002487">
    <property type="entry name" value="PRK01759.1"/>
    <property type="match status" value="1"/>
</dbReference>
<dbReference type="NCBIfam" id="NF003448">
    <property type="entry name" value="PRK05007.1"/>
    <property type="match status" value="1"/>
</dbReference>
<dbReference type="NCBIfam" id="TIGR01693">
    <property type="entry name" value="UTase_glnD"/>
    <property type="match status" value="1"/>
</dbReference>
<dbReference type="PANTHER" id="PTHR47320">
    <property type="entry name" value="BIFUNCTIONAL URIDYLYLTRANSFERASE/URIDYLYL-REMOVING ENZYME"/>
    <property type="match status" value="1"/>
</dbReference>
<dbReference type="PANTHER" id="PTHR47320:SF1">
    <property type="entry name" value="BIFUNCTIONAL URIDYLYLTRANSFERASE_URIDYLYL-REMOVING ENZYME"/>
    <property type="match status" value="1"/>
</dbReference>
<dbReference type="Pfam" id="PF01842">
    <property type="entry name" value="ACT"/>
    <property type="match status" value="2"/>
</dbReference>
<dbReference type="Pfam" id="PF08335">
    <property type="entry name" value="GlnD_UR_UTase"/>
    <property type="match status" value="1"/>
</dbReference>
<dbReference type="Pfam" id="PF01966">
    <property type="entry name" value="HD"/>
    <property type="match status" value="1"/>
</dbReference>
<dbReference type="Pfam" id="PF01909">
    <property type="entry name" value="NTP_transf_2"/>
    <property type="match status" value="1"/>
</dbReference>
<dbReference type="PIRSF" id="PIRSF006288">
    <property type="entry name" value="PII_uridyltransf"/>
    <property type="match status" value="1"/>
</dbReference>
<dbReference type="SMART" id="SM00471">
    <property type="entry name" value="HDc"/>
    <property type="match status" value="1"/>
</dbReference>
<dbReference type="SUPFAM" id="SSF55021">
    <property type="entry name" value="ACT-like"/>
    <property type="match status" value="2"/>
</dbReference>
<dbReference type="SUPFAM" id="SSF109604">
    <property type="entry name" value="HD-domain/PDEase-like"/>
    <property type="match status" value="1"/>
</dbReference>
<dbReference type="SUPFAM" id="SSF81301">
    <property type="entry name" value="Nucleotidyltransferase"/>
    <property type="match status" value="1"/>
</dbReference>
<dbReference type="SUPFAM" id="SSF81593">
    <property type="entry name" value="Nucleotidyltransferase substrate binding subunit/domain"/>
    <property type="match status" value="1"/>
</dbReference>
<dbReference type="SUPFAM" id="SSF81891">
    <property type="entry name" value="Poly A polymerase C-terminal region-like"/>
    <property type="match status" value="1"/>
</dbReference>
<dbReference type="PROSITE" id="PS51671">
    <property type="entry name" value="ACT"/>
    <property type="match status" value="2"/>
</dbReference>
<dbReference type="PROSITE" id="PS51831">
    <property type="entry name" value="HD"/>
    <property type="match status" value="1"/>
</dbReference>
<feature type="chain" id="PRO_1000204799" description="Bifunctional uridylyltransferase/uridylyl-removing enzyme">
    <location>
        <begin position="1"/>
        <end position="904"/>
    </location>
</feature>
<feature type="domain" description="HD" evidence="2">
    <location>
        <begin position="479"/>
        <end position="601"/>
    </location>
</feature>
<feature type="domain" description="ACT 1" evidence="1">
    <location>
        <begin position="720"/>
        <end position="801"/>
    </location>
</feature>
<feature type="domain" description="ACT 2" evidence="1">
    <location>
        <begin position="827"/>
        <end position="904"/>
    </location>
</feature>
<feature type="region of interest" description="Uridylyltransferase">
    <location>
        <begin position="1"/>
        <end position="360"/>
    </location>
</feature>
<feature type="region of interest" description="Disordered" evidence="3">
    <location>
        <begin position="1"/>
        <end position="25"/>
    </location>
</feature>
<feature type="region of interest" description="Uridylyl-removing">
    <location>
        <begin position="361"/>
        <end position="719"/>
    </location>
</feature>
<feature type="compositionally biased region" description="Low complexity" evidence="3">
    <location>
        <begin position="7"/>
        <end position="23"/>
    </location>
</feature>
<accession>C6DAI1</accession>
<organism>
    <name type="scientific">Pectobacterium carotovorum subsp. carotovorum (strain PC1)</name>
    <dbReference type="NCBI Taxonomy" id="561230"/>
    <lineage>
        <taxon>Bacteria</taxon>
        <taxon>Pseudomonadati</taxon>
        <taxon>Pseudomonadota</taxon>
        <taxon>Gammaproteobacteria</taxon>
        <taxon>Enterobacterales</taxon>
        <taxon>Pectobacteriaceae</taxon>
        <taxon>Pectobacterium</taxon>
    </lineage>
</organism>
<gene>
    <name evidence="1" type="primary">glnD</name>
    <name type="ordered locus">PC1_0939</name>
</gene>
<protein>
    <recommendedName>
        <fullName evidence="1">Bifunctional uridylyltransferase/uridylyl-removing enzyme</fullName>
        <shortName evidence="1">UTase/UR</shortName>
    </recommendedName>
    <alternativeName>
        <fullName evidence="1">Bifunctional [protein-PII] modification enzyme</fullName>
    </alternativeName>
    <alternativeName>
        <fullName evidence="1">Bifunctional nitrogen sensor protein</fullName>
    </alternativeName>
    <domain>
        <recommendedName>
            <fullName evidence="1">[Protein-PII] uridylyltransferase</fullName>
            <shortName evidence="1">PII uridylyltransferase</shortName>
            <shortName evidence="1">UTase</shortName>
            <ecNumber evidence="1">2.7.7.59</ecNumber>
        </recommendedName>
    </domain>
    <domain>
        <recommendedName>
            <fullName evidence="1">[Protein-PII]-UMP uridylyl-removing enzyme</fullName>
            <shortName evidence="1">UR</shortName>
            <ecNumber evidence="1">3.1.4.-</ecNumber>
        </recommendedName>
    </domain>
</protein>
<proteinExistence type="inferred from homology"/>
<reference key="1">
    <citation type="submission" date="2009-07" db="EMBL/GenBank/DDBJ databases">
        <title>Complete sequence of Pectobacterium carotovorum subsp. carotovorum PC1.</title>
        <authorList>
            <consortium name="US DOE Joint Genome Institute"/>
            <person name="Lucas S."/>
            <person name="Copeland A."/>
            <person name="Lapidus A."/>
            <person name="Glavina del Rio T."/>
            <person name="Tice H."/>
            <person name="Bruce D."/>
            <person name="Goodwin L."/>
            <person name="Pitluck S."/>
            <person name="Munk A.C."/>
            <person name="Brettin T."/>
            <person name="Detter J.C."/>
            <person name="Han C."/>
            <person name="Tapia R."/>
            <person name="Larimer F."/>
            <person name="Land M."/>
            <person name="Hauser L."/>
            <person name="Kyrpides N."/>
            <person name="Mikhailova N."/>
            <person name="Balakrishnan V."/>
            <person name="Glasner J."/>
            <person name="Perna N.T."/>
        </authorList>
    </citation>
    <scope>NUCLEOTIDE SEQUENCE [LARGE SCALE GENOMIC DNA]</scope>
    <source>
        <strain>PC1</strain>
    </source>
</reference>
<evidence type="ECO:0000255" key="1">
    <source>
        <dbReference type="HAMAP-Rule" id="MF_00277"/>
    </source>
</evidence>
<evidence type="ECO:0000255" key="2">
    <source>
        <dbReference type="PROSITE-ProRule" id="PRU01175"/>
    </source>
</evidence>
<evidence type="ECO:0000256" key="3">
    <source>
        <dbReference type="SAM" id="MobiDB-lite"/>
    </source>
</evidence>
<sequence length="904" mass="104374">MTDNRFSPDSTPPDASSPDSPVDTIASTQLPASPLTYADDMLNCQTLKQQLELFQLWLGSEFRSGVSAEKLIDARTLFIDRLLQRLWYFYGFENIAQTSLVAVGGYGRGELHPLSDIDVLVLSQTALSEEHSQRVGQFITLLWDLKLEVGHSVRTLEECLQEGRADISVATNLIESRMICGDVALFLTLQKHVFSDEFWPSSAFFPAKIAEQQERHQRYHSTSYNLEPDIKSSPGGLRDIHTLLWVARRHFGATSLNEMVGFGFLTEAERKELNECQSFLWRIRFALHLILPRYDNRLLFDRQLNVAQLLQYQGEGNTPVERMMKDFYRMTRRVSELNQMLLQLFDEAILALDASEKPRPIDDEFQLRGNLVDLRDENLFIKKPEAIMRMFYLMVRNRDISGIYSTTLRQLRHARRHLASPLCTIPEARQLFMNILRHPHAVSRALLPMHRHSVLWAYMPLWGNIVGQMQFDLFHAYTVDEHTIRVLLKLESFADEETRPQHPLCVELYPRLPQPELLLLAALFHDIAKGRGGDHSELGAQDVLEFAALHGLNSREAQLVSWLVRCHLLMSVTAQRRDIQDPTVIQQFATEVQSETRLRYLVSLTVADICATNETLWNSWKQSLLRELYFATEKQLRRGMQNTPDLRERVRHHRLQALALLRMDNIDEEALHHIWSRCRADYFLRHSPNQLAWHARHLLEHDVNKPLVLISHQASRGGTEIFIWSPDRPYLFAAVAGELDRRNLSVHDAQIFTSRDGMAMDTFIVLEPDGSPLAQDRHEMIRHALEQALTQRHYQHPRVRRPSPKLRHFSVPTEVNFLPTHTDRRSYMELSALDQPGLLARIGEIFADLNLSLHGARISTIGERVEDLFILADSDRRALKPELRLKLQERLTEALNPNDKVPLS</sequence>
<comment type="function">
    <text evidence="1">Modifies, by uridylylation and deuridylylation, the PII regulatory proteins (GlnB and homologs), in response to the nitrogen status of the cell that GlnD senses through the glutamine level. Under low glutamine levels, catalyzes the conversion of the PII proteins and UTP to PII-UMP and PPi, while under higher glutamine levels, GlnD hydrolyzes PII-UMP to PII and UMP (deuridylylation). Thus, controls uridylylation state and activity of the PII proteins, and plays an important role in the regulation of nitrogen assimilation and metabolism.</text>
</comment>
<comment type="catalytic activity">
    <reaction evidence="1">
        <text>[protein-PII]-L-tyrosine + UTP = [protein-PII]-uridylyl-L-tyrosine + diphosphate</text>
        <dbReference type="Rhea" id="RHEA:13673"/>
        <dbReference type="Rhea" id="RHEA-COMP:12147"/>
        <dbReference type="Rhea" id="RHEA-COMP:12148"/>
        <dbReference type="ChEBI" id="CHEBI:33019"/>
        <dbReference type="ChEBI" id="CHEBI:46398"/>
        <dbReference type="ChEBI" id="CHEBI:46858"/>
        <dbReference type="ChEBI" id="CHEBI:90602"/>
        <dbReference type="EC" id="2.7.7.59"/>
    </reaction>
</comment>
<comment type="catalytic activity">
    <reaction evidence="1">
        <text>[protein-PII]-uridylyl-L-tyrosine + H2O = [protein-PII]-L-tyrosine + UMP + H(+)</text>
        <dbReference type="Rhea" id="RHEA:48600"/>
        <dbReference type="Rhea" id="RHEA-COMP:12147"/>
        <dbReference type="Rhea" id="RHEA-COMP:12148"/>
        <dbReference type="ChEBI" id="CHEBI:15377"/>
        <dbReference type="ChEBI" id="CHEBI:15378"/>
        <dbReference type="ChEBI" id="CHEBI:46858"/>
        <dbReference type="ChEBI" id="CHEBI:57865"/>
        <dbReference type="ChEBI" id="CHEBI:90602"/>
    </reaction>
</comment>
<comment type="cofactor">
    <cofactor evidence="1">
        <name>Mg(2+)</name>
        <dbReference type="ChEBI" id="CHEBI:18420"/>
    </cofactor>
</comment>
<comment type="activity regulation">
    <text evidence="1">Uridylyltransferase (UTase) activity is inhibited by glutamine, while glutamine activates uridylyl-removing (UR) activity.</text>
</comment>
<comment type="domain">
    <text evidence="1">Has four distinct domains: an N-terminal nucleotidyltransferase (NT) domain responsible for UTase activity, a central HD domain that encodes UR activity, and two C-terminal ACT domains that seem to have a role in glutamine sensing.</text>
</comment>
<comment type="similarity">
    <text evidence="1">Belongs to the GlnD family.</text>
</comment>
<name>GLND_PECCP</name>
<keyword id="KW-0378">Hydrolase</keyword>
<keyword id="KW-0460">Magnesium</keyword>
<keyword id="KW-0511">Multifunctional enzyme</keyword>
<keyword id="KW-0548">Nucleotidyltransferase</keyword>
<keyword id="KW-0677">Repeat</keyword>
<keyword id="KW-0808">Transferase</keyword>